<evidence type="ECO:0000250" key="1">
    <source>
        <dbReference type="UniProtKB" id="O85043"/>
    </source>
</evidence>
<evidence type="ECO:0000255" key="2">
    <source>
        <dbReference type="PROSITE-ProRule" id="PRU01280"/>
    </source>
</evidence>
<evidence type="ECO:0000269" key="3">
    <source>
    </source>
</evidence>
<evidence type="ECO:0000269" key="4">
    <source>
    </source>
</evidence>
<evidence type="ECO:0000269" key="5">
    <source>
    </source>
</evidence>
<evidence type="ECO:0000269" key="6">
    <source>
    </source>
</evidence>
<evidence type="ECO:0000269" key="7">
    <source>
    </source>
</evidence>
<evidence type="ECO:0000269" key="8">
    <source>
    </source>
</evidence>
<evidence type="ECO:0000303" key="9">
    <source>
    </source>
</evidence>
<evidence type="ECO:0000303" key="10">
    <source>
    </source>
</evidence>
<evidence type="ECO:0000305" key="11"/>
<evidence type="ECO:0000305" key="12">
    <source>
    </source>
</evidence>
<evidence type="ECO:0007744" key="13">
    <source>
        <dbReference type="PDB" id="6JY5"/>
    </source>
</evidence>
<evidence type="ECO:0007829" key="14">
    <source>
        <dbReference type="PDB" id="6JY5"/>
    </source>
</evidence>
<dbReference type="EMBL" id="AF038430">
    <property type="protein sequence ID" value="AAC32554.1"/>
    <property type="molecule type" value="Genomic_DNA"/>
</dbReference>
<dbReference type="EMBL" id="CP001801">
    <property type="protein sequence ID" value="ACX95760.1"/>
    <property type="molecule type" value="Genomic_DNA"/>
</dbReference>
<dbReference type="PDB" id="6JY5">
    <property type="method" value="X-ray"/>
    <property type="resolution" value="2.15 A"/>
    <property type="chains" value="A/B/C/D/E=1-77"/>
</dbReference>
<dbReference type="PDBsum" id="6JY5"/>
<dbReference type="SMR" id="O85044"/>
<dbReference type="STRING" id="555778.Hneap_0917"/>
<dbReference type="KEGG" id="hna:Hneap_0917"/>
<dbReference type="eggNOG" id="COG4576">
    <property type="taxonomic scope" value="Bacteria"/>
</dbReference>
<dbReference type="HOGENOM" id="CLU_148498_1_0_6"/>
<dbReference type="OrthoDB" id="540628at2"/>
<dbReference type="Proteomes" id="UP000009102">
    <property type="component" value="Chromosome"/>
</dbReference>
<dbReference type="GO" id="GO:0031470">
    <property type="term" value="C:carboxysome"/>
    <property type="evidence" value="ECO:0007669"/>
    <property type="project" value="UniProtKB-SubCell"/>
</dbReference>
<dbReference type="GO" id="GO:0015977">
    <property type="term" value="P:carbon fixation"/>
    <property type="evidence" value="ECO:0007669"/>
    <property type="project" value="UniProtKB-KW"/>
</dbReference>
<dbReference type="Gene3D" id="2.40.50.220">
    <property type="entry name" value="EutN/Ccml"/>
    <property type="match status" value="1"/>
</dbReference>
<dbReference type="InterPro" id="IPR014077">
    <property type="entry name" value="CsoS4B"/>
</dbReference>
<dbReference type="InterPro" id="IPR004992">
    <property type="entry name" value="EutN_CcmL"/>
</dbReference>
<dbReference type="InterPro" id="IPR036677">
    <property type="entry name" value="EutN_CcmL_sf"/>
</dbReference>
<dbReference type="NCBIfam" id="TIGR02704">
    <property type="entry name" value="carboxysome_B"/>
    <property type="match status" value="1"/>
</dbReference>
<dbReference type="Pfam" id="PF03319">
    <property type="entry name" value="EutN_CcmL"/>
    <property type="match status" value="1"/>
</dbReference>
<dbReference type="SUPFAM" id="SSF159133">
    <property type="entry name" value="EutN/CcmL-like"/>
    <property type="match status" value="1"/>
</dbReference>
<dbReference type="PROSITE" id="PS51932">
    <property type="entry name" value="BMV"/>
    <property type="match status" value="1"/>
</dbReference>
<protein>
    <recommendedName>
        <fullName>Carboxysome shell vertex protein CsoS4B</fullName>
    </recommendedName>
</protein>
<proteinExistence type="evidence at protein level"/>
<accession>O85044</accession>
<accession>D0KZ87</accession>
<organism>
    <name type="scientific">Halothiobacillus neapolitanus (strain ATCC 23641 / c2)</name>
    <name type="common">Thiobacillus neapolitanus</name>
    <dbReference type="NCBI Taxonomy" id="555778"/>
    <lineage>
        <taxon>Bacteria</taxon>
        <taxon>Pseudomonadati</taxon>
        <taxon>Pseudomonadota</taxon>
        <taxon>Gammaproteobacteria</taxon>
        <taxon>Chromatiales</taxon>
        <taxon>Halothiobacillaceae</taxon>
        <taxon>Halothiobacillus</taxon>
    </lineage>
</organism>
<feature type="chain" id="PRO_0000452082" description="Carboxysome shell vertex protein CsoS4B">
    <location>
        <begin position="1"/>
        <end position="81"/>
    </location>
</feature>
<feature type="domain" description="BMV" evidence="2">
    <location>
        <begin position="1"/>
        <end position="77"/>
    </location>
</feature>
<feature type="strand" evidence="14">
    <location>
        <begin position="2"/>
        <end position="9"/>
    </location>
</feature>
<feature type="helix" evidence="14">
    <location>
        <begin position="17"/>
        <end position="19"/>
    </location>
</feature>
<feature type="strand" evidence="14">
    <location>
        <begin position="24"/>
        <end position="29"/>
    </location>
</feature>
<feature type="strand" evidence="14">
    <location>
        <begin position="34"/>
        <end position="38"/>
    </location>
</feature>
<feature type="strand" evidence="14">
    <location>
        <begin position="48"/>
        <end position="53"/>
    </location>
</feature>
<feature type="helix" evidence="14">
    <location>
        <begin position="54"/>
        <end position="59"/>
    </location>
</feature>
<feature type="strand" evidence="14">
    <location>
        <begin position="60"/>
        <end position="64"/>
    </location>
</feature>
<feature type="strand" evidence="14">
    <location>
        <begin position="69"/>
        <end position="75"/>
    </location>
</feature>
<name>CSS4B_HALNC</name>
<reference key="1">
    <citation type="journal article" date="1998" name="J. Bacteriol.">
        <title>Insertion mutation of the form I cbbL gene encoding ribulose bisphosphate carboxylase/oxygenase (RuBisCO) in Thiobacillus neapolitanus results in expression of form II RuBisCO, loss of carboxysomes, and an increased CO2 requirement for growth.</title>
        <authorList>
            <person name="Baker S.H."/>
            <person name="Jin S."/>
            <person name="Aldrich H.C."/>
            <person name="Howard G.T."/>
            <person name="Shively J.M."/>
        </authorList>
    </citation>
    <scope>NUCLEOTIDE SEQUENCE [GENOMIC DNA]</scope>
    <source>
        <strain>ATCC 23641 / c2</strain>
    </source>
</reference>
<reference key="2">
    <citation type="submission" date="2009-10" db="EMBL/GenBank/DDBJ databases">
        <title>Complete sequence of Halothiobacillus neapolitanus c2.</title>
        <authorList>
            <consortium name="US DOE Joint Genome Institute"/>
            <person name="Lucas S."/>
            <person name="Copeland A."/>
            <person name="Lapidus A."/>
            <person name="Glavina del Rio T."/>
            <person name="Tice H."/>
            <person name="Bruce D."/>
            <person name="Goodwin L."/>
            <person name="Pitluck S."/>
            <person name="Davenport K."/>
            <person name="Brettin T."/>
            <person name="Detter J.C."/>
            <person name="Han C."/>
            <person name="Tapia R."/>
            <person name="Larimer F."/>
            <person name="Land M."/>
            <person name="Hauser L."/>
            <person name="Kyrpides N."/>
            <person name="Mikhailova N."/>
            <person name="Kerfeld C."/>
            <person name="Cannon G."/>
            <person name="Heinhort S."/>
        </authorList>
    </citation>
    <scope>NUCLEOTIDE SEQUENCE [LARGE SCALE GENOMIC DNA]</scope>
    <source>
        <strain>ATCC 23641 / c2</strain>
    </source>
</reference>
<reference key="3">
    <citation type="journal article" date="2008" name="Science">
        <title>Atomic-level models of the bacterial carboxysome shell.</title>
        <authorList>
            <person name="Tanaka S."/>
            <person name="Kerfeld C.A."/>
            <person name="Sawaya M.R."/>
            <person name="Cai F."/>
            <person name="Heinhorst S."/>
            <person name="Cannon G.C."/>
            <person name="Yeates T.O."/>
        </authorList>
    </citation>
    <scope>DISCUSSION OF SEQUENCE</scope>
</reference>
<reference key="4">
    <citation type="journal article" date="2009" name="PLoS ONE">
        <title>The pentameric vertex proteins are necessary for the icosahedral carboxysome shell to function as a CO2 leakage barrier.</title>
        <authorList>
            <person name="Cai F."/>
            <person name="Menon B.B."/>
            <person name="Cannon G.C."/>
            <person name="Curry K.J."/>
            <person name="Shively J.M."/>
            <person name="Heinhorst S."/>
        </authorList>
    </citation>
    <scope>FUNCTION</scope>
    <scope>SUBCELLULAR LOCATION</scope>
    <scope>DISRUPTION PHENOTYPE</scope>
    <source>
        <strain>ATCC 23641 / c2</strain>
    </source>
</reference>
<reference key="5">
    <citation type="journal article" date="2012" name="Proc. Natl. Acad. Sci. U.S.A.">
        <title>Modularity of a carbon-fixing protein organelle.</title>
        <authorList>
            <person name="Bonacci W."/>
            <person name="Teng P.K."/>
            <person name="Afonso B."/>
            <person name="Niederholtmeyer H."/>
            <person name="Grob P."/>
            <person name="Silver P.A."/>
            <person name="Savage D.F."/>
        </authorList>
    </citation>
    <scope>BIOTECHNOLOGY</scope>
    <source>
        <strain>ATCC 23641 / c2</strain>
    </source>
</reference>
<reference key="6">
    <citation type="journal article" date="2019" name="Nat. Microbiol.">
        <title>DABs are inorganic carbon pumps found throughout prokaryotic phyla.</title>
        <authorList>
            <person name="Desmarais J.J."/>
            <person name="Flamholz A.I."/>
            <person name="Blikstad C."/>
            <person name="Dugan E.J."/>
            <person name="Laughlin T.G."/>
            <person name="Oltrogge L.M."/>
            <person name="Chen A.W."/>
            <person name="Wetmore K."/>
            <person name="Diamond S."/>
            <person name="Wang J.Y."/>
            <person name="Savage D.F."/>
        </authorList>
    </citation>
    <scope>DISRUPTION PHENOTYPE</scope>
    <source>
        <strain>ATCC 23641 / c2</strain>
    </source>
</reference>
<reference key="7">
    <citation type="journal article" date="2020" name="Nat. Commun.">
        <title>Reprogramming bacterial protein organelles as a nanoreactor for hydrogen production.</title>
        <authorList>
            <person name="Li T."/>
            <person name="Jiang Q."/>
            <person name="Huang J."/>
            <person name="Aitchison C.M."/>
            <person name="Huang F."/>
            <person name="Yang M."/>
            <person name="Dykes G.F."/>
            <person name="He H.L."/>
            <person name="Wang Q."/>
            <person name="Sprick R.S."/>
            <person name="Cooper A.I."/>
            <person name="Liu L.N."/>
        </authorList>
    </citation>
    <scope>CARBOXYSOME ASSEMBLY</scope>
    <scope>BIOTECHNOLOGY</scope>
</reference>
<reference evidence="13" key="8">
    <citation type="journal article" date="2019" name="Biochem. Biophys. Res. Commun.">
        <title>Crystal structure of pentameric shell protein CsoS4B of Halothiobacillus neapolitanus alpha-carboxysome.</title>
        <authorList>
            <person name="Zhao Y.Y."/>
            <person name="Jiang Y.L."/>
            <person name="Chen Y."/>
            <person name="Zhou C.Z."/>
            <person name="Li Q."/>
        </authorList>
    </citation>
    <scope>X-RAY CRYSTALLOGRAPHY (2.15 ANGSTROMS) OF 1-77</scope>
    <scope>SUBUNIT</scope>
    <scope>DOMAIN</scope>
</reference>
<keyword id="KW-0002">3D-structure</keyword>
<keyword id="KW-1283">Bacterial microcompartment</keyword>
<keyword id="KW-0120">Carbon dioxide fixation</keyword>
<keyword id="KW-1282">Carboxysome</keyword>
<keyword id="KW-1185">Reference proteome</keyword>
<sequence length="81" mass="8762">MEVMRVRSDLIATRRIPGLKNISLRVMEDATGKVSVACDPIGVPEGCWVFTISGSAARFGVGDFEILTDLTIGGIIDHWVT</sequence>
<gene>
    <name evidence="9" type="primary">csoS4B</name>
    <name evidence="10" type="synonym">orfB</name>
    <name type="ordered locus">Hneap_0917</name>
</gene>
<comment type="function">
    <text evidence="4 12">Probably forms vertices in the carboxysome. Has been modeled to induce curvature upon insertion into an otherwise flat hexagonal layer of major carboxysome subunits (Probable). A minor shell protein, only 12 pentamers of CsoS4A/CsoS4B are calculated to be present in each carboxysome. The 2 CsoS4 proteins contribute to the impermeability of the carboxysome to CO(2) (PubMed:19844578). Its central pore is probably too small to allow passage of metabolites; its function might be to anchor different proteins or metabolites to the carboxysome (Probable).</text>
</comment>
<comment type="function">
    <text evidence="8">Unlike beta-carboxysomes, alpha-carboxysomes (Cb) can form without cargo protein. CsoS2 is essential for Cb formation and is also capable of targeting foreign proteins to the Cb. The Cb shell assembles with the aid of CsoS2; CsoS1A, CsoS1B and CsoS1C form the majority of the shell while CsoS4A and CsoS4B form vertices. CsoS1D forms pseudohexamers that probably control metabolite flux into and out of the shell.</text>
</comment>
<comment type="subunit">
    <text evidence="6">Homopentamer.</text>
</comment>
<comment type="subcellular location">
    <subcellularLocation>
        <location evidence="3">Carboxysome</location>
    </subcellularLocation>
    <text evidence="1 4">Probably forms vertices in the icosahedral carboxysome (By similarity). This bacterium makes alpha-type carboxysomes (PubMed:19844578).</text>
</comment>
<comment type="domain">
    <text evidence="6">Forms a stable homopentamer with a convex and concave side. A short loop (residues 60-69) protrudes above the center of the convex face to different degrees. The tight homopentamer forms a pore with an opening of about 2.9 Angstroms in diameter at its most narrow, surrounded by the amino acids Ser-Gly-Ser-Ala-Ala (one from each subunit).</text>
</comment>
<comment type="disruption phenotype">
    <text evidence="4 7">A double csoS4a-csoS4B disruption does not grow in ambient air, has a wild-type growth rate in 5% CO(2), called a high-CO(2) requiring phenotype, hcr. It does not grow to the same cell density as wild-type. 1/3 fewer carboxysomes are seen per cell, about 13% of which are elongated. The carboxysome shell is more permeable than usual to inorganic carbon. Required for growth in ambient air (PubMed:31406332).</text>
</comment>
<comment type="biotechnology">
    <text evidence="5 8">Expression of 10 genes for alpha-carboxysome (Cb) proteins (cbbL-cbbS-csoS2-csoS3-csoS4A-csoS4B-csoS1C-csoS1A-csoS1B-csoS1D) in E.coli generates compartments that resemble Cb, contain RuBisCO and have its catalytic activity, showing it is possible to make artificial, functional Cb using these 10 genes. Cargo proteins can be targeted to these organelles (PubMed:22184212). Artificial Cb assembly in E.coli requires csoS2-csoS4A-csoS4B-csoS1C-csoS1A-csoS1B-csoS1D (but not the gene for carbonic anhydrase, csoS3). Targeting proteins to the organelle requires at least one of the CsoS2 C-repeats; 3 repeats gives the best localization. A nanoreactor of the Cb shell proteins has been engineered which generates H(2) using a ferredoxin-hydrogenase fusion (AC P07839-Q9FYU1) and a flavodoxin/ferredoxin--NADP reductase (AC A0A0K3QZA5) targeted separately to the Cb; the hydrogenase has first to be matured and activated by HydGXEF (AC Q8EAH9, Q8EAH8, Q8EAH7 and Q8EAH6 respectively). Encapsulation increases H(2) production about 20% during anaerobic growth, and over 4-fold more during aerobic growth (PubMed:33116131).</text>
</comment>
<comment type="similarity">
    <text evidence="11">Belongs to the CcmL/EutN family. CsoS4 subfamily.</text>
</comment>